<gene>
    <name evidence="1" type="primary">FOXG1</name>
    <name evidence="6" type="synonym">BF-1</name>
</gene>
<comment type="function">
    <text evidence="5">Probable transcription factor.</text>
</comment>
<comment type="subcellular location">
    <subcellularLocation>
        <location evidence="2 7">Nucleus</location>
    </subcellularLocation>
</comment>
<comment type="tissue specificity">
    <text evidence="5">Expressed in uncleaved zygotes with increasing intensity until the 8-cell stage. Confined to aboral region during 16-cell and 32-cell stage, afterwards found in ectodermal derivatives, in particular surrounding the blastopore and along the tentacular axis. Not expressed in the apical organ nor along the esophageal axis in mesodermal and endodermal derivatives. Expression subsides after hatching.</text>
</comment>
<proteinExistence type="evidence at transcript level"/>
<protein>
    <recommendedName>
        <fullName evidence="1">Forkhead box protein G1</fullName>
    </recommendedName>
    <alternativeName>
        <fullName evidence="6">Brain factor 1</fullName>
        <shortName evidence="6">ctenoBF-1</shortName>
    </alternativeName>
</protein>
<reference evidence="7 8" key="1">
    <citation type="journal article" date="2002" name="Dev. Genes Evol.">
        <title>Expression of the ctenophore Brain Factor 1 forkhead gene ortholog (ctenoBF-1) mRNA is restricted to the presumptive mouth and feeding apparatus: implications for axial organization in the Metazoa.</title>
        <authorList>
            <person name="Yamada A."/>
            <person name="Martindale M.Q."/>
        </authorList>
    </citation>
    <scope>NUCLEOTIDE SEQUENCE [MRNA]</scope>
    <scope>PROBABLE FUNCTION</scope>
    <scope>TISSUE SPECIFICITY</scope>
    <source>
        <tissue evidence="5">Larva</tissue>
    </source>
</reference>
<evidence type="ECO:0000250" key="1">
    <source>
        <dbReference type="UniProtKB" id="P55316"/>
    </source>
</evidence>
<evidence type="ECO:0000255" key="2"/>
<evidence type="ECO:0000255" key="3">
    <source>
        <dbReference type="PROSITE-ProRule" id="PRU00089"/>
    </source>
</evidence>
<evidence type="ECO:0000256" key="4">
    <source>
        <dbReference type="SAM" id="MobiDB-lite"/>
    </source>
</evidence>
<evidence type="ECO:0000269" key="5">
    <source>
    </source>
</evidence>
<evidence type="ECO:0000303" key="6">
    <source>
    </source>
</evidence>
<evidence type="ECO:0000305" key="7"/>
<evidence type="ECO:0000312" key="8">
    <source>
        <dbReference type="EMBL" id="AAN17798.1"/>
    </source>
</evidence>
<name>FOXG1_MNELE</name>
<keyword id="KW-0217">Developmental protein</keyword>
<keyword id="KW-0238">DNA-binding</keyword>
<keyword id="KW-0539">Nucleus</keyword>
<keyword id="KW-0804">Transcription</keyword>
<keyword id="KW-0805">Transcription regulation</keyword>
<feature type="chain" id="PRO_0000389517" description="Forkhead box protein G1">
    <location>
        <begin position="1"/>
        <end position="318"/>
    </location>
</feature>
<feature type="DNA-binding region" description="Fork-head" evidence="3">
    <location>
        <begin position="27"/>
        <end position="121"/>
    </location>
</feature>
<feature type="region of interest" description="Disordered" evidence="4">
    <location>
        <begin position="193"/>
        <end position="258"/>
    </location>
</feature>
<feature type="compositionally biased region" description="Polar residues" evidence="4">
    <location>
        <begin position="201"/>
        <end position="210"/>
    </location>
</feature>
<feature type="compositionally biased region" description="Low complexity" evidence="4">
    <location>
        <begin position="220"/>
        <end position="233"/>
    </location>
</feature>
<feature type="compositionally biased region" description="Low complexity" evidence="4">
    <location>
        <begin position="241"/>
        <end position="256"/>
    </location>
</feature>
<dbReference type="EMBL" id="AF477500">
    <property type="protein sequence ID" value="AAN17798.1"/>
    <property type="molecule type" value="mRNA"/>
</dbReference>
<dbReference type="SMR" id="Q8ITI5"/>
<dbReference type="HOGENOM" id="CLU_875214_0_0_1"/>
<dbReference type="GO" id="GO:0005634">
    <property type="term" value="C:nucleus"/>
    <property type="evidence" value="ECO:0007669"/>
    <property type="project" value="UniProtKB-SubCell"/>
</dbReference>
<dbReference type="GO" id="GO:0003700">
    <property type="term" value="F:DNA-binding transcription factor activity"/>
    <property type="evidence" value="ECO:0007669"/>
    <property type="project" value="InterPro"/>
</dbReference>
<dbReference type="GO" id="GO:1990837">
    <property type="term" value="F:sequence-specific double-stranded DNA binding"/>
    <property type="evidence" value="ECO:0007669"/>
    <property type="project" value="TreeGrafter"/>
</dbReference>
<dbReference type="GO" id="GO:0006357">
    <property type="term" value="P:regulation of transcription by RNA polymerase II"/>
    <property type="evidence" value="ECO:0007669"/>
    <property type="project" value="TreeGrafter"/>
</dbReference>
<dbReference type="CDD" id="cd20021">
    <property type="entry name" value="FH_FOXG"/>
    <property type="match status" value="1"/>
</dbReference>
<dbReference type="FunFam" id="1.10.10.10:FF:000135">
    <property type="entry name" value="forkhead box protein G1"/>
    <property type="match status" value="1"/>
</dbReference>
<dbReference type="Gene3D" id="1.10.10.10">
    <property type="entry name" value="Winged helix-like DNA-binding domain superfamily/Winged helix DNA-binding domain"/>
    <property type="match status" value="1"/>
</dbReference>
<dbReference type="InterPro" id="IPR001766">
    <property type="entry name" value="Fork_head_dom"/>
</dbReference>
<dbReference type="InterPro" id="IPR047208">
    <property type="entry name" value="FOXG1"/>
</dbReference>
<dbReference type="InterPro" id="IPR030456">
    <property type="entry name" value="TF_fork_head_CS_2"/>
</dbReference>
<dbReference type="InterPro" id="IPR036388">
    <property type="entry name" value="WH-like_DNA-bd_sf"/>
</dbReference>
<dbReference type="InterPro" id="IPR036390">
    <property type="entry name" value="WH_DNA-bd_sf"/>
</dbReference>
<dbReference type="PANTHER" id="PTHR46617">
    <property type="entry name" value="FORKHEAD BOX PROTEIN G1"/>
    <property type="match status" value="1"/>
</dbReference>
<dbReference type="PANTHER" id="PTHR46617:SF6">
    <property type="entry name" value="FORKHEAD BOX PROTEIN G1"/>
    <property type="match status" value="1"/>
</dbReference>
<dbReference type="Pfam" id="PF00250">
    <property type="entry name" value="Forkhead"/>
    <property type="match status" value="1"/>
</dbReference>
<dbReference type="PRINTS" id="PR00053">
    <property type="entry name" value="FORKHEAD"/>
</dbReference>
<dbReference type="SMART" id="SM00339">
    <property type="entry name" value="FH"/>
    <property type="match status" value="1"/>
</dbReference>
<dbReference type="SUPFAM" id="SSF46785">
    <property type="entry name" value="Winged helix' DNA-binding domain"/>
    <property type="match status" value="1"/>
</dbReference>
<dbReference type="PROSITE" id="PS00658">
    <property type="entry name" value="FORK_HEAD_2"/>
    <property type="match status" value="1"/>
</dbReference>
<dbReference type="PROSITE" id="PS50039">
    <property type="entry name" value="FORK_HEAD_3"/>
    <property type="match status" value="1"/>
</dbReference>
<organism>
    <name type="scientific">Mnemiopsis leidyi</name>
    <name type="common">Sea walnut</name>
    <name type="synonym">Warty comb jellyfish</name>
    <dbReference type="NCBI Taxonomy" id="27923"/>
    <lineage>
        <taxon>Eukaryota</taxon>
        <taxon>Metazoa</taxon>
        <taxon>Ctenophora</taxon>
        <taxon>Tentaculata</taxon>
        <taxon>Lobata</taxon>
        <taxon>Bolinopsidae</taxon>
        <taxon>Mnemiopsis</taxon>
    </lineage>
</organism>
<sequence>MVVTTATKPHPFSIENILKSASPKPQKPLFSYNALIAMAISQSPLKKLTLSEIYDFIIETFPYYRDNKKGWQNSIRHNLSLNKCFVKVPRHYNDPGKGNYWMLNPNSDEVFIGGKLRRRPGQNGGSLESYMHLKTRTSPYQRGDTVCKRDRVVYLSNSGAGNCQFYQPVPCSSPTAMLSRSSLIVQTSPTTLTIPHHPPQNYIQTLSPNVSPVRVGNQTSPRQSALPSSSLPLLPSPPSLPSKLSSPPLPSLSTNLPSPPLDTGDILLSPFLRQTVDSTSQNFLEHMIRIREQVQRSGHLALAQSRAVVYQPIPRKSL</sequence>
<accession>Q8ITI5</accession>